<accession>A7HT50</accession>
<organism>
    <name type="scientific">Parvibaculum lavamentivorans (strain DS-1 / DSM 13023 / NCIMB 13966)</name>
    <dbReference type="NCBI Taxonomy" id="402881"/>
    <lineage>
        <taxon>Bacteria</taxon>
        <taxon>Pseudomonadati</taxon>
        <taxon>Pseudomonadota</taxon>
        <taxon>Alphaproteobacteria</taxon>
        <taxon>Hyphomicrobiales</taxon>
        <taxon>Parvibaculaceae</taxon>
        <taxon>Parvibaculum</taxon>
    </lineage>
</organism>
<proteinExistence type="inferred from homology"/>
<name>ATPA_PARL1</name>
<sequence length="509" mass="54994">MDIQAAEISAILKQQIKDFGAEAQVSEIGQVLSVGDGIARVYGLDNVEAGEMVEFPGGVRGMALNLEEDNVGVVIFGSDRNIKEGDTVKRTGAIVDIPVGKGLLGRVVDPLGNPLDGKGPIEGVERRRVDVKAPGIIPRKSVHEPMQTGLKAIDALIPIGRGQRELIIGDRQTGKTAIAIDAILNQKPLNQGDDENQKLYCIYVAIGQKRSTVAQIAKTLEENGALEYTIIVAATASDPAPLQFLAPFAGCTLGEYFRDNAMHGLVVYDDLSKQAVAYRQMSLLLRRPPGREAYPGDVFYLHSRLLERAAKLNDENGNGSLTALPIIETQANDVSAYIPTNVISITDGQIFLETDLFYQGVRPAVNVGLSVSRVGSSAQIKAMKQVAGKIKGELAQYREMAAFAQFGSDLDAATQRLLNRGARLTELLKQGQFSPLKVEEQVVVIYAGVNGYLDKLPVADVGRYEQDLLRNIRSSHPGILDAIRSEKQISADTEAKLKSAVENFSKAFA</sequence>
<protein>
    <recommendedName>
        <fullName evidence="1">ATP synthase subunit alpha</fullName>
        <ecNumber evidence="1">7.1.2.2</ecNumber>
    </recommendedName>
    <alternativeName>
        <fullName evidence="1">ATP synthase F1 sector subunit alpha</fullName>
    </alternativeName>
    <alternativeName>
        <fullName evidence="1">F-ATPase subunit alpha</fullName>
    </alternativeName>
</protein>
<comment type="function">
    <text evidence="1">Produces ATP from ADP in the presence of a proton gradient across the membrane. The alpha chain is a regulatory subunit.</text>
</comment>
<comment type="catalytic activity">
    <reaction evidence="1">
        <text>ATP + H2O + 4 H(+)(in) = ADP + phosphate + 5 H(+)(out)</text>
        <dbReference type="Rhea" id="RHEA:57720"/>
        <dbReference type="ChEBI" id="CHEBI:15377"/>
        <dbReference type="ChEBI" id="CHEBI:15378"/>
        <dbReference type="ChEBI" id="CHEBI:30616"/>
        <dbReference type="ChEBI" id="CHEBI:43474"/>
        <dbReference type="ChEBI" id="CHEBI:456216"/>
        <dbReference type="EC" id="7.1.2.2"/>
    </reaction>
</comment>
<comment type="subunit">
    <text evidence="1">F-type ATPases have 2 components, CF(1) - the catalytic core - and CF(0) - the membrane proton channel. CF(1) has five subunits: alpha(3), beta(3), gamma(1), delta(1), epsilon(1). CF(0) has three main subunits: a(1), b(2) and c(9-12). The alpha and beta chains form an alternating ring which encloses part of the gamma chain. CF(1) is attached to CF(0) by a central stalk formed by the gamma and epsilon chains, while a peripheral stalk is formed by the delta and b chains.</text>
</comment>
<comment type="subcellular location">
    <subcellularLocation>
        <location evidence="1">Cell inner membrane</location>
        <topology evidence="1">Peripheral membrane protein</topology>
    </subcellularLocation>
</comment>
<comment type="similarity">
    <text evidence="1">Belongs to the ATPase alpha/beta chains family.</text>
</comment>
<keyword id="KW-0066">ATP synthesis</keyword>
<keyword id="KW-0067">ATP-binding</keyword>
<keyword id="KW-0997">Cell inner membrane</keyword>
<keyword id="KW-1003">Cell membrane</keyword>
<keyword id="KW-0139">CF(1)</keyword>
<keyword id="KW-0375">Hydrogen ion transport</keyword>
<keyword id="KW-0406">Ion transport</keyword>
<keyword id="KW-0472">Membrane</keyword>
<keyword id="KW-0547">Nucleotide-binding</keyword>
<keyword id="KW-1185">Reference proteome</keyword>
<keyword id="KW-1278">Translocase</keyword>
<keyword id="KW-0813">Transport</keyword>
<reference key="1">
    <citation type="journal article" date="2011" name="Stand. Genomic Sci.">
        <title>Complete genome sequence of Parvibaculum lavamentivorans type strain (DS-1(T)).</title>
        <authorList>
            <person name="Schleheck D."/>
            <person name="Weiss M."/>
            <person name="Pitluck S."/>
            <person name="Bruce D."/>
            <person name="Land M.L."/>
            <person name="Han S."/>
            <person name="Saunders E."/>
            <person name="Tapia R."/>
            <person name="Detter C."/>
            <person name="Brettin T."/>
            <person name="Han J."/>
            <person name="Woyke T."/>
            <person name="Goodwin L."/>
            <person name="Pennacchio L."/>
            <person name="Nolan M."/>
            <person name="Cook A.M."/>
            <person name="Kjelleberg S."/>
            <person name="Thomas T."/>
        </authorList>
    </citation>
    <scope>NUCLEOTIDE SEQUENCE [LARGE SCALE GENOMIC DNA]</scope>
    <source>
        <strain>DS-1 / DSM 13023 / NCIMB 13966</strain>
    </source>
</reference>
<gene>
    <name evidence="1" type="primary">atpA</name>
    <name type="ordered locus">Plav_1463</name>
</gene>
<evidence type="ECO:0000255" key="1">
    <source>
        <dbReference type="HAMAP-Rule" id="MF_01346"/>
    </source>
</evidence>
<dbReference type="EC" id="7.1.2.2" evidence="1"/>
<dbReference type="EMBL" id="CP000774">
    <property type="protein sequence ID" value="ABS63083.1"/>
    <property type="molecule type" value="Genomic_DNA"/>
</dbReference>
<dbReference type="RefSeq" id="WP_012110364.1">
    <property type="nucleotide sequence ID" value="NC_009719.1"/>
</dbReference>
<dbReference type="SMR" id="A7HT50"/>
<dbReference type="STRING" id="402881.Plav_1463"/>
<dbReference type="KEGG" id="pla:Plav_1463"/>
<dbReference type="eggNOG" id="COG0056">
    <property type="taxonomic scope" value="Bacteria"/>
</dbReference>
<dbReference type="HOGENOM" id="CLU_010091_2_1_5"/>
<dbReference type="OrthoDB" id="9803053at2"/>
<dbReference type="Proteomes" id="UP000006377">
    <property type="component" value="Chromosome"/>
</dbReference>
<dbReference type="GO" id="GO:0005886">
    <property type="term" value="C:plasma membrane"/>
    <property type="evidence" value="ECO:0007669"/>
    <property type="project" value="UniProtKB-SubCell"/>
</dbReference>
<dbReference type="GO" id="GO:0045259">
    <property type="term" value="C:proton-transporting ATP synthase complex"/>
    <property type="evidence" value="ECO:0007669"/>
    <property type="project" value="UniProtKB-KW"/>
</dbReference>
<dbReference type="GO" id="GO:0043531">
    <property type="term" value="F:ADP binding"/>
    <property type="evidence" value="ECO:0007669"/>
    <property type="project" value="TreeGrafter"/>
</dbReference>
<dbReference type="GO" id="GO:0005524">
    <property type="term" value="F:ATP binding"/>
    <property type="evidence" value="ECO:0007669"/>
    <property type="project" value="UniProtKB-UniRule"/>
</dbReference>
<dbReference type="GO" id="GO:0046933">
    <property type="term" value="F:proton-transporting ATP synthase activity, rotational mechanism"/>
    <property type="evidence" value="ECO:0007669"/>
    <property type="project" value="UniProtKB-UniRule"/>
</dbReference>
<dbReference type="CDD" id="cd18113">
    <property type="entry name" value="ATP-synt_F1_alpha_C"/>
    <property type="match status" value="1"/>
</dbReference>
<dbReference type="CDD" id="cd18116">
    <property type="entry name" value="ATP-synt_F1_alpha_N"/>
    <property type="match status" value="1"/>
</dbReference>
<dbReference type="CDD" id="cd01132">
    <property type="entry name" value="F1-ATPase_alpha_CD"/>
    <property type="match status" value="1"/>
</dbReference>
<dbReference type="FunFam" id="1.20.150.20:FF:000001">
    <property type="entry name" value="ATP synthase subunit alpha"/>
    <property type="match status" value="1"/>
</dbReference>
<dbReference type="FunFam" id="2.40.30.20:FF:000001">
    <property type="entry name" value="ATP synthase subunit alpha"/>
    <property type="match status" value="1"/>
</dbReference>
<dbReference type="FunFam" id="3.40.50.300:FF:002432">
    <property type="entry name" value="ATP synthase subunit alpha, mitochondrial"/>
    <property type="match status" value="1"/>
</dbReference>
<dbReference type="Gene3D" id="2.40.30.20">
    <property type="match status" value="1"/>
</dbReference>
<dbReference type="Gene3D" id="1.20.150.20">
    <property type="entry name" value="ATP synthase alpha/beta chain, C-terminal domain"/>
    <property type="match status" value="1"/>
</dbReference>
<dbReference type="Gene3D" id="3.40.50.300">
    <property type="entry name" value="P-loop containing nucleotide triphosphate hydrolases"/>
    <property type="match status" value="1"/>
</dbReference>
<dbReference type="HAMAP" id="MF_01346">
    <property type="entry name" value="ATP_synth_alpha_bact"/>
    <property type="match status" value="1"/>
</dbReference>
<dbReference type="InterPro" id="IPR023366">
    <property type="entry name" value="ATP_synth_asu-like_sf"/>
</dbReference>
<dbReference type="InterPro" id="IPR000793">
    <property type="entry name" value="ATP_synth_asu_C"/>
</dbReference>
<dbReference type="InterPro" id="IPR038376">
    <property type="entry name" value="ATP_synth_asu_C_sf"/>
</dbReference>
<dbReference type="InterPro" id="IPR033732">
    <property type="entry name" value="ATP_synth_F1_a_nt-bd_dom"/>
</dbReference>
<dbReference type="InterPro" id="IPR005294">
    <property type="entry name" value="ATP_synth_F1_asu"/>
</dbReference>
<dbReference type="InterPro" id="IPR020003">
    <property type="entry name" value="ATPase_a/bsu_AS"/>
</dbReference>
<dbReference type="InterPro" id="IPR004100">
    <property type="entry name" value="ATPase_F1/V1/A1_a/bsu_N"/>
</dbReference>
<dbReference type="InterPro" id="IPR036121">
    <property type="entry name" value="ATPase_F1/V1/A1_a/bsu_N_sf"/>
</dbReference>
<dbReference type="InterPro" id="IPR000194">
    <property type="entry name" value="ATPase_F1/V1/A1_a/bsu_nucl-bd"/>
</dbReference>
<dbReference type="InterPro" id="IPR027417">
    <property type="entry name" value="P-loop_NTPase"/>
</dbReference>
<dbReference type="NCBIfam" id="TIGR00962">
    <property type="entry name" value="atpA"/>
    <property type="match status" value="1"/>
</dbReference>
<dbReference type="NCBIfam" id="NF009884">
    <property type="entry name" value="PRK13343.1"/>
    <property type="match status" value="1"/>
</dbReference>
<dbReference type="PANTHER" id="PTHR48082">
    <property type="entry name" value="ATP SYNTHASE SUBUNIT ALPHA, MITOCHONDRIAL"/>
    <property type="match status" value="1"/>
</dbReference>
<dbReference type="PANTHER" id="PTHR48082:SF2">
    <property type="entry name" value="ATP SYNTHASE SUBUNIT ALPHA, MITOCHONDRIAL"/>
    <property type="match status" value="1"/>
</dbReference>
<dbReference type="Pfam" id="PF00006">
    <property type="entry name" value="ATP-synt_ab"/>
    <property type="match status" value="1"/>
</dbReference>
<dbReference type="Pfam" id="PF00306">
    <property type="entry name" value="ATP-synt_ab_C"/>
    <property type="match status" value="1"/>
</dbReference>
<dbReference type="Pfam" id="PF02874">
    <property type="entry name" value="ATP-synt_ab_N"/>
    <property type="match status" value="1"/>
</dbReference>
<dbReference type="PIRSF" id="PIRSF039088">
    <property type="entry name" value="F_ATPase_subunit_alpha"/>
    <property type="match status" value="1"/>
</dbReference>
<dbReference type="SUPFAM" id="SSF47917">
    <property type="entry name" value="C-terminal domain of alpha and beta subunits of F1 ATP synthase"/>
    <property type="match status" value="1"/>
</dbReference>
<dbReference type="SUPFAM" id="SSF50615">
    <property type="entry name" value="N-terminal domain of alpha and beta subunits of F1 ATP synthase"/>
    <property type="match status" value="1"/>
</dbReference>
<dbReference type="SUPFAM" id="SSF52540">
    <property type="entry name" value="P-loop containing nucleoside triphosphate hydrolases"/>
    <property type="match status" value="1"/>
</dbReference>
<dbReference type="PROSITE" id="PS00152">
    <property type="entry name" value="ATPASE_ALPHA_BETA"/>
    <property type="match status" value="1"/>
</dbReference>
<feature type="chain" id="PRO_1000073357" description="ATP synthase subunit alpha">
    <location>
        <begin position="1"/>
        <end position="509"/>
    </location>
</feature>
<feature type="binding site" evidence="1">
    <location>
        <begin position="169"/>
        <end position="176"/>
    </location>
    <ligand>
        <name>ATP</name>
        <dbReference type="ChEBI" id="CHEBI:30616"/>
    </ligand>
</feature>
<feature type="site" description="Required for activity" evidence="1">
    <location>
        <position position="370"/>
    </location>
</feature>